<keyword id="KW-0010">Activator</keyword>
<keyword id="KW-0963">Cytoplasm</keyword>
<keyword id="KW-0678">Repressor</keyword>
<keyword id="KW-0694">RNA-binding</keyword>
<keyword id="KW-0810">Translation regulation</keyword>
<name>CSRA2_PSEPH</name>
<accession>P69920</accession>
<accession>Q9X6D6</accession>
<gene>
    <name evidence="1 9" type="primary">csrA2</name>
    <name evidence="8" type="synonym">rsmA</name>
</gene>
<evidence type="ECO:0000255" key="1">
    <source>
        <dbReference type="HAMAP-Rule" id="MF_00167"/>
    </source>
</evidence>
<evidence type="ECO:0000269" key="2">
    <source>
    </source>
</evidence>
<evidence type="ECO:0000269" key="3">
    <source>
    </source>
</evidence>
<evidence type="ECO:0000269" key="4">
    <source>
    </source>
</evidence>
<evidence type="ECO:0000269" key="5">
    <source>
    </source>
</evidence>
<evidence type="ECO:0000269" key="6">
    <source>
    </source>
</evidence>
<evidence type="ECO:0000269" key="7">
    <source>
    </source>
</evidence>
<evidence type="ECO:0000303" key="8">
    <source>
    </source>
</evidence>
<evidence type="ECO:0000305" key="9"/>
<organism>
    <name type="scientific">Pseudomonas protegens (strain DSM 19095 / LMG 27888 / CFBP 6595 / CHA0)</name>
    <dbReference type="NCBI Taxonomy" id="1124983"/>
    <lineage>
        <taxon>Bacteria</taxon>
        <taxon>Pseudomonadati</taxon>
        <taxon>Pseudomonadota</taxon>
        <taxon>Gammaproteobacteria</taxon>
        <taxon>Pseudomonadales</taxon>
        <taxon>Pseudomonadaceae</taxon>
        <taxon>Pseudomonas</taxon>
    </lineage>
</organism>
<feature type="chain" id="PRO_0000177081" description="Translational regulator CsrA2">
    <location>
        <begin position="1"/>
        <end position="62"/>
    </location>
</feature>
<dbReference type="EMBL" id="AF136151">
    <property type="protein sequence ID" value="AAD33682.1"/>
    <property type="molecule type" value="Genomic_DNA"/>
</dbReference>
<dbReference type="SMR" id="P69920"/>
<dbReference type="PATRIC" id="fig|1124983.3.peg.4603"/>
<dbReference type="eggNOG" id="COG1551">
    <property type="taxonomic scope" value="Bacteria"/>
</dbReference>
<dbReference type="GO" id="GO:0005829">
    <property type="term" value="C:cytosol"/>
    <property type="evidence" value="ECO:0007669"/>
    <property type="project" value="TreeGrafter"/>
</dbReference>
<dbReference type="GO" id="GO:0048027">
    <property type="term" value="F:mRNA 5'-UTR binding"/>
    <property type="evidence" value="ECO:0007669"/>
    <property type="project" value="UniProtKB-UniRule"/>
</dbReference>
<dbReference type="GO" id="GO:0006402">
    <property type="term" value="P:mRNA catabolic process"/>
    <property type="evidence" value="ECO:0007669"/>
    <property type="project" value="InterPro"/>
</dbReference>
<dbReference type="GO" id="GO:0045947">
    <property type="term" value="P:negative regulation of translational initiation"/>
    <property type="evidence" value="ECO:0007669"/>
    <property type="project" value="UniProtKB-UniRule"/>
</dbReference>
<dbReference type="GO" id="GO:0045948">
    <property type="term" value="P:positive regulation of translational initiation"/>
    <property type="evidence" value="ECO:0007669"/>
    <property type="project" value="UniProtKB-UniRule"/>
</dbReference>
<dbReference type="GO" id="GO:0006109">
    <property type="term" value="P:regulation of carbohydrate metabolic process"/>
    <property type="evidence" value="ECO:0007669"/>
    <property type="project" value="UniProtKB-UniRule"/>
</dbReference>
<dbReference type="FunFam" id="2.60.40.4380:FF:000001">
    <property type="entry name" value="Translational regulator CsrA"/>
    <property type="match status" value="1"/>
</dbReference>
<dbReference type="Gene3D" id="2.60.40.4380">
    <property type="entry name" value="Translational regulator CsrA"/>
    <property type="match status" value="1"/>
</dbReference>
<dbReference type="HAMAP" id="MF_00167">
    <property type="entry name" value="CsrA"/>
    <property type="match status" value="1"/>
</dbReference>
<dbReference type="InterPro" id="IPR003751">
    <property type="entry name" value="CsrA"/>
</dbReference>
<dbReference type="InterPro" id="IPR036107">
    <property type="entry name" value="CsrA_sf"/>
</dbReference>
<dbReference type="NCBIfam" id="TIGR00202">
    <property type="entry name" value="csrA"/>
    <property type="match status" value="1"/>
</dbReference>
<dbReference type="NCBIfam" id="NF002469">
    <property type="entry name" value="PRK01712.1"/>
    <property type="match status" value="1"/>
</dbReference>
<dbReference type="PANTHER" id="PTHR34984">
    <property type="entry name" value="CARBON STORAGE REGULATOR"/>
    <property type="match status" value="1"/>
</dbReference>
<dbReference type="PANTHER" id="PTHR34984:SF1">
    <property type="entry name" value="CARBON STORAGE REGULATOR"/>
    <property type="match status" value="1"/>
</dbReference>
<dbReference type="Pfam" id="PF02599">
    <property type="entry name" value="CsrA"/>
    <property type="match status" value="1"/>
</dbReference>
<dbReference type="SUPFAM" id="SSF117130">
    <property type="entry name" value="CsrA-like"/>
    <property type="match status" value="1"/>
</dbReference>
<proteinExistence type="evidence at protein level"/>
<sequence length="62" mass="6953">MLILTRRCAESLIIGDGEITVTVLGVKGNQVRIGVNAPKEVAVHREEIYLRIKKEKDEEPSH</sequence>
<reference key="1">
    <citation type="journal article" date="1999" name="Proc. Natl. Acad. Sci. U.S.A.">
        <title>Global GacA-steered control of cyanide and exoprotease production in Pseudomonas fluorescens involves specific ribosome binding sites.</title>
        <authorList>
            <person name="Blumer C."/>
            <person name="Heeb S."/>
            <person name="Pessi G."/>
            <person name="Haas D."/>
        </authorList>
    </citation>
    <scope>NUCLEOTIDE SEQUENCE [GENOMIC DNA]</scope>
    <scope>FUNCTION</scope>
    <scope>DISRUPTION PHENOTYPE</scope>
    <source>
        <strain>DSM 19095 / LMG 27888 / CFBP 6595 / CHA0</strain>
    </source>
</reference>
<reference key="2">
    <citation type="journal article" date="2002" name="J. Bacteriol.">
        <title>Regulatory RNA as mediator in GacA/RsmA-dependent global control of exoproduct formation in Pseudomonas fluorescens CHA0.</title>
        <authorList>
            <person name="Heeb S."/>
            <person name="Blumer C."/>
            <person name="Haas D."/>
        </authorList>
    </citation>
    <scope>FUNCTION</scope>
    <scope>INDUCTION</scope>
    <scope>RNA-BINDING</scope>
    <source>
        <strain>DSM 19095 / LMG 27888 / CFBP 6595 / CHA0</strain>
    </source>
</reference>
<reference key="3">
    <citation type="journal article" date="2003" name="Mol. Microbiol.">
        <title>RsmY, a small regulatory RNA, is required in concert with RsmZ for GacA-dependent expression of biocontrol traits in Pseudomonas fluorescens CHA0.</title>
        <authorList>
            <person name="Valverde C."/>
            <person name="Heeb S."/>
            <person name="Keel C."/>
            <person name="Haas D."/>
        </authorList>
    </citation>
    <scope>FUNCTION</scope>
    <scope>RNA-BINDING</scope>
    <source>
        <strain>DSM 19095 / LMG 27888 / CFBP 6595 / CHA0</strain>
    </source>
</reference>
<reference key="4">
    <citation type="journal article" date="2005" name="J. Bacteriol.">
        <title>Posttranscriptional repression of GacS/GacA-controlled genes by the RNA-binding protein RsmE acting together with RsmA in the biocontrol strain Pseudomonas fluorescens CHA0.</title>
        <authorList>
            <person name="Reimmann C."/>
            <person name="Valverde C."/>
            <person name="Kay E."/>
            <person name="Haas D."/>
        </authorList>
    </citation>
    <scope>FUNCTION</scope>
    <scope>INDUCTION</scope>
    <scope>DISRUPTION PHENOTYPE</scope>
    <source>
        <strain>DSM 19095 / LMG 27888 / CFBP 6595 / CHA0</strain>
    </source>
</reference>
<reference key="5">
    <citation type="journal article" date="2005" name="Proc. Natl. Acad. Sci. U.S.A.">
        <title>Three small RNAs jointly ensure secondary metabolism and biocontrol in Pseudomonas fluorescens CHA0.</title>
        <authorList>
            <person name="Kay E."/>
            <person name="Dubuis C."/>
            <person name="Haas D."/>
        </authorList>
    </citation>
    <scope>FUNCTION</scope>
    <scope>RNA-BINDING</scope>
    <source>
        <strain>DSM 19095 / LMG 27888 / CFBP 6595 / CHA0</strain>
    </source>
</reference>
<reference key="6">
    <citation type="journal article" date="2013" name="RNA Biol.">
        <title>RNA pentaloop structures as effective targets of regulators belonging to the RsmA/CsrA protein family.</title>
        <authorList>
            <person name="Lapouge K."/>
            <person name="Perozzo R."/>
            <person name="Iwaszkiewicz J."/>
            <person name="Bertelli C."/>
            <person name="Zoete V."/>
            <person name="Michielin O."/>
            <person name="Scapozza L."/>
            <person name="Haas D."/>
        </authorList>
    </citation>
    <scope>FUNCTION</scope>
</reference>
<reference key="7">
    <citation type="journal article" date="2015" name="Microbiol. Mol. Biol. Rev.">
        <title>Regulation of bacterial virulence by Csr (Rsm) systems.</title>
        <authorList>
            <person name="Vakulskas C.A."/>
            <person name="Potts A.H."/>
            <person name="Babitzke P."/>
            <person name="Ahmer B.M."/>
            <person name="Romeo T."/>
        </authorList>
    </citation>
    <scope>REVIEW</scope>
</reference>
<comment type="function">
    <text evidence="2 3 4 5 6 7">A translational regulator that binds mRNA to regulate translation initiation and/or mRNA stability. Post-transcriptionally represses the expression of genes controlled by GacA/GacS (PubMed:10570200, PubMed:11807065, PubMed:15601712, PubMed:23635605). Represses expression of hcnA; alterations in the ribosome-binding site relieve the repression (PubMed:10570200). Binds specifically to small RNAs (sRNA) RsmX, RsmZ and RsmY; these sRNAs fold into secondary structures with multiple GGA sequence in loops to which the CsrA proteins bind (PubMed:11807065, PubMed:14622422, PubMed:16286659). Binding to RsmX, RsmY or RsmZ titrates the protein so that it can no longer bind mRNA and repress translation; each sRNA can bind more than one protein (PubMed:14622422, PubMed:16286659). Required for optimal expression and stability of sRNAs RsmX, RsmY and RsmZ (PubMed:15601712, PubMed:16286659). Deletion of rsmY or rsmZ alone has no detectable phenotype, but a double sRNA deletion has a marked decrease in production of secondary metabolites HCN, exoprotease AprA, antifungal agent 2,4-diacetylphloroglucinol and protects cucumber plants from fungal infection less well than wild-type (PubMed:14622422). The triple sRNA deletion has even stronger loss of these phenotypes (PubMed:16286659).</text>
</comment>
<comment type="subunit">
    <text evidence="1">Homodimer; the beta-strands of each monomer intercalate to form a hydrophobic core, while the alpha-helices form wings that extend away from the core.</text>
</comment>
<comment type="subcellular location">
    <subcellularLocation>
        <location evidence="1">Cytoplasm</location>
    </subcellularLocation>
</comment>
<comment type="induction">
    <text evidence="3 5">Active throughout the cell cycle (PubMed:11807065). Expressed during exponential and stationary phases; more protein expressed in stationary phase (at protein level) (PubMed:15601712). Under partial control of the GacA/GacS two-component regulatory system (PubMed:15601712).</text>
</comment>
<comment type="disruption phenotype">
    <text evidence="2 3">Increased expression of aprA (usually repressed by this protein) (PubMed:10570200). Partially suppresses a gacA deletion mutant (PubMed:10570200, PubMed:11807065). Double csrA1-csrA2 deletion mutants fully suppress the requirement for GacA/GacS in control of its regulon (PubMed:15601712). Decreased expression and stability of RsmY and RsmZ sRNAs (PubMed:15601712).</text>
</comment>
<comment type="similarity">
    <text evidence="1">Belongs to the CsrA/RsmA family.</text>
</comment>
<protein>
    <recommendedName>
        <fullName evidence="1 9">Translational regulator CsrA2</fullName>
    </recommendedName>
    <alternativeName>
        <fullName evidence="1">Carbon storage regulator 2</fullName>
    </alternativeName>
    <alternativeName>
        <fullName evidence="8">Regulator of secondary metabolites RsmA</fullName>
    </alternativeName>
</protein>